<feature type="chain" id="PRO_0000099948" description="2-oxoglutarate synthase subunit KorC">
    <location>
        <begin position="1"/>
        <end position="186"/>
    </location>
</feature>
<gene>
    <name type="primary">korC</name>
    <name type="ordered locus">MTBMA_c14170</name>
</gene>
<evidence type="ECO:0000269" key="1">
    <source>
    </source>
</evidence>
<proteinExistence type="evidence at protein level"/>
<organism>
    <name type="scientific">Methanothermobacter marburgensis (strain ATCC BAA-927 / DSM 2133 / JCM 14651 / NBRC 100331 / OCM 82 / Marburg)</name>
    <name type="common">Methanobacterium thermoautotrophicum</name>
    <dbReference type="NCBI Taxonomy" id="79929"/>
    <lineage>
        <taxon>Archaea</taxon>
        <taxon>Methanobacteriati</taxon>
        <taxon>Methanobacteriota</taxon>
        <taxon>Methanomada group</taxon>
        <taxon>Methanobacteria</taxon>
        <taxon>Methanobacteriales</taxon>
        <taxon>Methanobacteriaceae</taxon>
        <taxon>Methanothermobacter</taxon>
    </lineage>
</organism>
<sequence length="186" mass="19977">MRKEIRIAGFGGQGVILAGIVLGKAASLYDGLYAVQTQSYGPEARGGASRAEVVISDEEIDYPKVQSPDILVAMSHQALLTYMDDLKAGGTLIVDPDMVIENEIQDFVEERNISYFRAPATRTAEEKVGITIVANMVMIGALTEATGVVSVRAAEEAIKNSVPPGTEEKNIMAFQAGRELIMEGQK</sequence>
<name>KORC_METTM</name>
<protein>
    <recommendedName>
        <fullName>2-oxoglutarate synthase subunit KorC</fullName>
        <ecNumber>1.2.7.3</ecNumber>
    </recommendedName>
    <alternativeName>
        <fullName>2-ketoglutarate oxidoreductase gamma chain</fullName>
        <shortName>KOR</shortName>
    </alternativeName>
    <alternativeName>
        <fullName>2-oxoglutarate-ferredoxin oxidoreductase subunit gamma</fullName>
    </alternativeName>
</protein>
<reference key="1">
    <citation type="journal article" date="2010" name="J. Bacteriol.">
        <title>Complete genome sequence of Methanothermobacter marburgensis, a methanoarchaeon model organism.</title>
        <authorList>
            <person name="Liesegang H."/>
            <person name="Kaster A.K."/>
            <person name="Wiezer A."/>
            <person name="Goenrich M."/>
            <person name="Wollherr A."/>
            <person name="Seedorf H."/>
            <person name="Gottschalk G."/>
            <person name="Thauer R.K."/>
        </authorList>
    </citation>
    <scope>NUCLEOTIDE SEQUENCE [LARGE SCALE GENOMIC DNA]</scope>
    <source>
        <strain>ATCC BAA-927 / DSM 2133 / JCM 14651 / NBRC 100331 / OCM 82 / Marburg</strain>
    </source>
</reference>
<reference key="2">
    <citation type="journal article" date="1997" name="Eur. J. Biochem.">
        <title>Structures and functions of four anabolic 2-oxoacid oxidoreductases in Methanobacterium thermoautotrophicum.</title>
        <authorList>
            <person name="Tersteegen A."/>
            <person name="Linder D."/>
            <person name="Thauer R.K."/>
            <person name="Hedderich R."/>
        </authorList>
    </citation>
    <scope>PROTEIN SEQUENCE OF 1-20</scope>
    <scope>BIOPHYSICOCHEMICAL PROPERTIES</scope>
    <scope>SUBUNIT</scope>
    <source>
        <strain>ATCC BAA-927 / DSM 2133 / JCM 14651 / NBRC 100331 / OCM 82 / Marburg</strain>
    </source>
</reference>
<keyword id="KW-0903">Direct protein sequencing</keyword>
<keyword id="KW-0560">Oxidoreductase</keyword>
<comment type="catalytic activity">
    <reaction>
        <text>2 oxidized [2Fe-2S]-[ferredoxin] + 2-oxoglutarate + CoA = succinyl-CoA + 2 reduced [2Fe-2S]-[ferredoxin] + CO2 + H(+)</text>
        <dbReference type="Rhea" id="RHEA:17297"/>
        <dbReference type="Rhea" id="RHEA-COMP:10000"/>
        <dbReference type="Rhea" id="RHEA-COMP:10001"/>
        <dbReference type="ChEBI" id="CHEBI:15378"/>
        <dbReference type="ChEBI" id="CHEBI:16526"/>
        <dbReference type="ChEBI" id="CHEBI:16810"/>
        <dbReference type="ChEBI" id="CHEBI:33737"/>
        <dbReference type="ChEBI" id="CHEBI:33738"/>
        <dbReference type="ChEBI" id="CHEBI:57287"/>
        <dbReference type="ChEBI" id="CHEBI:57292"/>
        <dbReference type="EC" id="1.2.7.3"/>
    </reaction>
</comment>
<comment type="biophysicochemical properties">
    <phDependence>
        <text evidence="1">Optimum pH is 9.0.</text>
    </phDependence>
    <temperatureDependence>
        <text evidence="1">Optimum temperature is 70 degrees Celsius.</text>
    </temperatureDependence>
</comment>
<comment type="subunit">
    <text evidence="1">Heterotetramer of the KorA, KorB, KorC and KorD subunits.</text>
</comment>
<dbReference type="EC" id="1.2.7.3"/>
<dbReference type="EMBL" id="CP001710">
    <property type="protein sequence ID" value="ADL59004.1"/>
    <property type="molecule type" value="Genomic_DNA"/>
</dbReference>
<dbReference type="RefSeq" id="WP_013296216.1">
    <property type="nucleotide sequence ID" value="NC_014408.1"/>
</dbReference>
<dbReference type="SMR" id="P80906"/>
<dbReference type="STRING" id="79929.MTBMA_c14170"/>
<dbReference type="PaxDb" id="79929-MTBMA_c14170"/>
<dbReference type="GeneID" id="43707858"/>
<dbReference type="GeneID" id="9705126"/>
<dbReference type="KEGG" id="mmg:MTBMA_c14170"/>
<dbReference type="PATRIC" id="fig|79929.8.peg.1381"/>
<dbReference type="HOGENOM" id="CLU_087284_0_0_2"/>
<dbReference type="OrthoDB" id="18183at2157"/>
<dbReference type="Proteomes" id="UP000000345">
    <property type="component" value="Chromosome"/>
</dbReference>
<dbReference type="GO" id="GO:0047553">
    <property type="term" value="F:2-oxoglutarate synthase activity"/>
    <property type="evidence" value="ECO:0007669"/>
    <property type="project" value="UniProtKB-EC"/>
</dbReference>
<dbReference type="Gene3D" id="3.40.920.10">
    <property type="entry name" value="Pyruvate-ferredoxin oxidoreductase, PFOR, domain III"/>
    <property type="match status" value="1"/>
</dbReference>
<dbReference type="InterPro" id="IPR052554">
    <property type="entry name" value="2-oxoglutarate_synth_KorC"/>
</dbReference>
<dbReference type="InterPro" id="IPR011894">
    <property type="entry name" value="PorC_KorC"/>
</dbReference>
<dbReference type="InterPro" id="IPR019752">
    <property type="entry name" value="Pyrv/ketoisovalerate_OxRed_cat"/>
</dbReference>
<dbReference type="InterPro" id="IPR002869">
    <property type="entry name" value="Pyrv_flavodox_OxRed_cen"/>
</dbReference>
<dbReference type="NCBIfam" id="TIGR02175">
    <property type="entry name" value="PorC_KorC"/>
    <property type="match status" value="1"/>
</dbReference>
<dbReference type="NCBIfam" id="NF006323">
    <property type="entry name" value="PRK08537.1"/>
    <property type="match status" value="1"/>
</dbReference>
<dbReference type="PANTHER" id="PTHR42730">
    <property type="entry name" value="2-OXOGLUTARATE SYNTHASE SUBUNIT KORC"/>
    <property type="match status" value="1"/>
</dbReference>
<dbReference type="PANTHER" id="PTHR42730:SF1">
    <property type="entry name" value="2-OXOGLUTARATE SYNTHASE SUBUNIT KORC"/>
    <property type="match status" value="1"/>
</dbReference>
<dbReference type="Pfam" id="PF01558">
    <property type="entry name" value="POR"/>
    <property type="match status" value="1"/>
</dbReference>
<dbReference type="SUPFAM" id="SSF53323">
    <property type="entry name" value="Pyruvate-ferredoxin oxidoreductase, PFOR, domain III"/>
    <property type="match status" value="1"/>
</dbReference>
<accession>P80906</accession>
<accession>D9PXQ6</accession>